<protein>
    <recommendedName>
        <fullName evidence="2">DNA polymerase interacting tetratricopeptide repeat-containing, protein of 47 kDa</fullName>
        <shortName evidence="2">DNA polymerase interacting TPR-containing, protein of 47 kDa</shortName>
    </recommendedName>
    <alternativeName>
        <fullName>Tetratricopeptide repeat protein 4 homolog</fullName>
        <shortName>TPR repeat protein 4 homolog</shortName>
    </alternativeName>
</protein>
<keyword id="KW-0963">Cytoplasm</keyword>
<keyword id="KW-0539">Nucleus</keyword>
<keyword id="KW-1185">Reference proteome</keyword>
<keyword id="KW-0677">Repeat</keyword>
<keyword id="KW-0802">TPR repeat</keyword>
<accession>A1Z6M6</accession>
<accession>Q6NMU5</accession>
<reference key="1">
    <citation type="journal article" date="2000" name="Science">
        <title>The genome sequence of Drosophila melanogaster.</title>
        <authorList>
            <person name="Adams M.D."/>
            <person name="Celniker S.E."/>
            <person name="Holt R.A."/>
            <person name="Evans C.A."/>
            <person name="Gocayne J.D."/>
            <person name="Amanatides P.G."/>
            <person name="Scherer S.E."/>
            <person name="Li P.W."/>
            <person name="Hoskins R.A."/>
            <person name="Galle R.F."/>
            <person name="George R.A."/>
            <person name="Lewis S.E."/>
            <person name="Richards S."/>
            <person name="Ashburner M."/>
            <person name="Henderson S.N."/>
            <person name="Sutton G.G."/>
            <person name="Wortman J.R."/>
            <person name="Yandell M.D."/>
            <person name="Zhang Q."/>
            <person name="Chen L.X."/>
            <person name="Brandon R.C."/>
            <person name="Rogers Y.-H.C."/>
            <person name="Blazej R.G."/>
            <person name="Champe M."/>
            <person name="Pfeiffer B.D."/>
            <person name="Wan K.H."/>
            <person name="Doyle C."/>
            <person name="Baxter E.G."/>
            <person name="Helt G."/>
            <person name="Nelson C.R."/>
            <person name="Miklos G.L.G."/>
            <person name="Abril J.F."/>
            <person name="Agbayani A."/>
            <person name="An H.-J."/>
            <person name="Andrews-Pfannkoch C."/>
            <person name="Baldwin D."/>
            <person name="Ballew R.M."/>
            <person name="Basu A."/>
            <person name="Baxendale J."/>
            <person name="Bayraktaroglu L."/>
            <person name="Beasley E.M."/>
            <person name="Beeson K.Y."/>
            <person name="Benos P.V."/>
            <person name="Berman B.P."/>
            <person name="Bhandari D."/>
            <person name="Bolshakov S."/>
            <person name="Borkova D."/>
            <person name="Botchan M.R."/>
            <person name="Bouck J."/>
            <person name="Brokstein P."/>
            <person name="Brottier P."/>
            <person name="Burtis K.C."/>
            <person name="Busam D.A."/>
            <person name="Butler H."/>
            <person name="Cadieu E."/>
            <person name="Center A."/>
            <person name="Chandra I."/>
            <person name="Cherry J.M."/>
            <person name="Cawley S."/>
            <person name="Dahlke C."/>
            <person name="Davenport L.B."/>
            <person name="Davies P."/>
            <person name="de Pablos B."/>
            <person name="Delcher A."/>
            <person name="Deng Z."/>
            <person name="Mays A.D."/>
            <person name="Dew I."/>
            <person name="Dietz S.M."/>
            <person name="Dodson K."/>
            <person name="Doup L.E."/>
            <person name="Downes M."/>
            <person name="Dugan-Rocha S."/>
            <person name="Dunkov B.C."/>
            <person name="Dunn P."/>
            <person name="Durbin K.J."/>
            <person name="Evangelista C.C."/>
            <person name="Ferraz C."/>
            <person name="Ferriera S."/>
            <person name="Fleischmann W."/>
            <person name="Fosler C."/>
            <person name="Gabrielian A.E."/>
            <person name="Garg N.S."/>
            <person name="Gelbart W.M."/>
            <person name="Glasser K."/>
            <person name="Glodek A."/>
            <person name="Gong F."/>
            <person name="Gorrell J.H."/>
            <person name="Gu Z."/>
            <person name="Guan P."/>
            <person name="Harris M."/>
            <person name="Harris N.L."/>
            <person name="Harvey D.A."/>
            <person name="Heiman T.J."/>
            <person name="Hernandez J.R."/>
            <person name="Houck J."/>
            <person name="Hostin D."/>
            <person name="Houston K.A."/>
            <person name="Howland T.J."/>
            <person name="Wei M.-H."/>
            <person name="Ibegwam C."/>
            <person name="Jalali M."/>
            <person name="Kalush F."/>
            <person name="Karpen G.H."/>
            <person name="Ke Z."/>
            <person name="Kennison J.A."/>
            <person name="Ketchum K.A."/>
            <person name="Kimmel B.E."/>
            <person name="Kodira C.D."/>
            <person name="Kraft C.L."/>
            <person name="Kravitz S."/>
            <person name="Kulp D."/>
            <person name="Lai Z."/>
            <person name="Lasko P."/>
            <person name="Lei Y."/>
            <person name="Levitsky A.A."/>
            <person name="Li J.H."/>
            <person name="Li Z."/>
            <person name="Liang Y."/>
            <person name="Lin X."/>
            <person name="Liu X."/>
            <person name="Mattei B."/>
            <person name="McIntosh T.C."/>
            <person name="McLeod M.P."/>
            <person name="McPherson D."/>
            <person name="Merkulov G."/>
            <person name="Milshina N.V."/>
            <person name="Mobarry C."/>
            <person name="Morris J."/>
            <person name="Moshrefi A."/>
            <person name="Mount S.M."/>
            <person name="Moy M."/>
            <person name="Murphy B."/>
            <person name="Murphy L."/>
            <person name="Muzny D.M."/>
            <person name="Nelson D.L."/>
            <person name="Nelson D.R."/>
            <person name="Nelson K.A."/>
            <person name="Nixon K."/>
            <person name="Nusskern D.R."/>
            <person name="Pacleb J.M."/>
            <person name="Palazzolo M."/>
            <person name="Pittman G.S."/>
            <person name="Pan S."/>
            <person name="Pollard J."/>
            <person name="Puri V."/>
            <person name="Reese M.G."/>
            <person name="Reinert K."/>
            <person name="Remington K."/>
            <person name="Saunders R.D.C."/>
            <person name="Scheeler F."/>
            <person name="Shen H."/>
            <person name="Shue B.C."/>
            <person name="Siden-Kiamos I."/>
            <person name="Simpson M."/>
            <person name="Skupski M.P."/>
            <person name="Smith T.J."/>
            <person name="Spier E."/>
            <person name="Spradling A.C."/>
            <person name="Stapleton M."/>
            <person name="Strong R."/>
            <person name="Sun E."/>
            <person name="Svirskas R."/>
            <person name="Tector C."/>
            <person name="Turner R."/>
            <person name="Venter E."/>
            <person name="Wang A.H."/>
            <person name="Wang X."/>
            <person name="Wang Z.-Y."/>
            <person name="Wassarman D.A."/>
            <person name="Weinstock G.M."/>
            <person name="Weissenbach J."/>
            <person name="Williams S.M."/>
            <person name="Woodage T."/>
            <person name="Worley K.C."/>
            <person name="Wu D."/>
            <person name="Yang S."/>
            <person name="Yao Q.A."/>
            <person name="Ye J."/>
            <person name="Yeh R.-F."/>
            <person name="Zaveri J.S."/>
            <person name="Zhan M."/>
            <person name="Zhang G."/>
            <person name="Zhao Q."/>
            <person name="Zheng L."/>
            <person name="Zheng X.H."/>
            <person name="Zhong F.N."/>
            <person name="Zhong W."/>
            <person name="Zhou X."/>
            <person name="Zhu S.C."/>
            <person name="Zhu X."/>
            <person name="Smith H.O."/>
            <person name="Gibbs R.A."/>
            <person name="Myers E.W."/>
            <person name="Rubin G.M."/>
            <person name="Venter J.C."/>
        </authorList>
    </citation>
    <scope>NUCLEOTIDE SEQUENCE [LARGE SCALE GENOMIC DNA]</scope>
    <source>
        <strain>Berkeley</strain>
    </source>
</reference>
<reference key="2">
    <citation type="journal article" date="2002" name="Genome Biol.">
        <title>Annotation of the Drosophila melanogaster euchromatic genome: a systematic review.</title>
        <authorList>
            <person name="Misra S."/>
            <person name="Crosby M.A."/>
            <person name="Mungall C.J."/>
            <person name="Matthews B.B."/>
            <person name="Campbell K.S."/>
            <person name="Hradecky P."/>
            <person name="Huang Y."/>
            <person name="Kaminker J.S."/>
            <person name="Millburn G.H."/>
            <person name="Prochnik S.E."/>
            <person name="Smith C.D."/>
            <person name="Tupy J.L."/>
            <person name="Whitfield E.J."/>
            <person name="Bayraktaroglu L."/>
            <person name="Berman B.P."/>
            <person name="Bettencourt B.R."/>
            <person name="Celniker S.E."/>
            <person name="de Grey A.D.N.J."/>
            <person name="Drysdale R.A."/>
            <person name="Harris N.L."/>
            <person name="Richter J."/>
            <person name="Russo S."/>
            <person name="Schroeder A.J."/>
            <person name="Shu S.Q."/>
            <person name="Stapleton M."/>
            <person name="Yamada C."/>
            <person name="Ashburner M."/>
            <person name="Gelbart W.M."/>
            <person name="Rubin G.M."/>
            <person name="Lewis S.E."/>
        </authorList>
    </citation>
    <scope>GENOME REANNOTATION</scope>
    <source>
        <strain>Berkeley</strain>
    </source>
</reference>
<reference key="3">
    <citation type="journal article" date="2002" name="Genome Biol.">
        <title>A Drosophila full-length cDNA resource.</title>
        <authorList>
            <person name="Stapleton M."/>
            <person name="Carlson J.W."/>
            <person name="Brokstein P."/>
            <person name="Yu C."/>
            <person name="Champe M."/>
            <person name="George R.A."/>
            <person name="Guarin H."/>
            <person name="Kronmiller B."/>
            <person name="Pacleb J.M."/>
            <person name="Park S."/>
            <person name="Wan K.H."/>
            <person name="Rubin G.M."/>
            <person name="Celniker S.E."/>
        </authorList>
    </citation>
    <scope>NUCLEOTIDE SEQUENCE [LARGE SCALE MRNA]</scope>
    <source>
        <strain>Berkeley</strain>
        <tissue>Embryo</tissue>
    </source>
</reference>
<reference key="4">
    <citation type="journal article" date="2001" name="J. Cell Sci.">
        <title>The Drosophila Dpit47 protein is a nuclear Hsp90 co-chaperone that interacts with DNA polymerase alpha.</title>
        <authorList>
            <person name="Crevel G."/>
            <person name="Bates H."/>
            <person name="Huikeshoven H."/>
            <person name="Cotterill S."/>
        </authorList>
    </citation>
    <scope>FUNCTION</scope>
    <scope>INTERACTION WITH HSP83; HSP70AA AND DNAPOL-ALPHA180</scope>
    <scope>SUBCELLULAR LOCATION</scope>
</reference>
<feature type="chain" id="PRO_0000447984" description="DNA polymerase interacting tetratricopeptide repeat-containing, protein of 47 kDa">
    <location>
        <begin position="1"/>
        <end position="396"/>
    </location>
</feature>
<feature type="repeat" description="TPR 1">
    <location>
        <begin position="91"/>
        <end position="124"/>
    </location>
</feature>
<feature type="repeat" description="TPR 2">
    <location>
        <begin position="129"/>
        <end position="162"/>
    </location>
</feature>
<feature type="repeat" description="TPR 3">
    <location>
        <begin position="163"/>
        <end position="196"/>
    </location>
</feature>
<feature type="sequence conflict" description="In Ref. 3; AAS15696." evidence="3" ref="3">
    <original>I</original>
    <variation>S</variation>
    <location>
        <position position="200"/>
    </location>
</feature>
<proteinExistence type="evidence at protein level"/>
<evidence type="ECO:0000269" key="1">
    <source>
    </source>
</evidence>
<evidence type="ECO:0000303" key="2">
    <source>
    </source>
</evidence>
<evidence type="ECO:0000305" key="3"/>
<gene>
    <name type="primary">Dpit47</name>
    <name type="ORF">CG3189</name>
</gene>
<sequence length="396" mass="46906">MKQMAAQKAWTDEERLELAAQLDAELDAFIDGLEKKRYEEGWPEDRWQEEMDKHPFFMKRAPQPGDDVHPMFEGLQKLKYDPEENTRDELALNYKEDGNFYMKHKKFRMAIYSFTEGIKTKTDNPDVLAVLYNNRSAAHFFIKNYRSSLSDAQRALFYKPDYTKARWRSAQCAYELERFDLCTQMCEELLEVDVDNEVAIALLHKNKMKKLEIERNQRKEAAEAKRRLTRFHRLRDAIEQRAIKFDDQKVGKKDVLSEELLYPKFLPLEDHPVHLDEDGSTLIWPAAFSYPEFLYSDFYQQLPETTTMRDCLATLLTEKLPYDKAHNYRLGNVHVYYENRKVGCVHKVDEEKQLAEIIAEKGFFVSGGALLFYVVHKDSRVEQEFINERRRPMVYS</sequence>
<comment type="function">
    <text evidence="1">May act as a co-chaperone for HSP83.</text>
</comment>
<comment type="subunit">
    <text evidence="1">Forms a complex with Hsp83 and Hsp70aa (PubMed:11493638). Interacts with DNApol-alpha180; the interaction inhibits the activity of the DNA polymerase and occurs only in proliferating cells but not in quiescent cells (PubMed:11493638).</text>
</comment>
<comment type="subcellular location">
    <subcellularLocation>
        <location evidence="1">Nucleus</location>
    </subcellularLocation>
    <subcellularLocation>
        <location evidence="1">Nucleus</location>
        <location evidence="1">Nucleoplasm</location>
    </subcellularLocation>
    <subcellularLocation>
        <location evidence="1">Cytoplasm</location>
    </subcellularLocation>
    <text evidence="1">In embryos prior to cellularisation, found in the nucleus and cytoplasm but after cellularisation seen predominantly in the nucleus.</text>
</comment>
<comment type="tissue specificity">
    <text evidence="1">More abundant in young embryos, pupae and females and a lower level expression seen in late embryos, larvae and males.</text>
</comment>
<comment type="similarity">
    <text evidence="3">Belongs to the TTC4 family.</text>
</comment>
<organism>
    <name type="scientific">Drosophila melanogaster</name>
    <name type="common">Fruit fly</name>
    <dbReference type="NCBI Taxonomy" id="7227"/>
    <lineage>
        <taxon>Eukaryota</taxon>
        <taxon>Metazoa</taxon>
        <taxon>Ecdysozoa</taxon>
        <taxon>Arthropoda</taxon>
        <taxon>Hexapoda</taxon>
        <taxon>Insecta</taxon>
        <taxon>Pterygota</taxon>
        <taxon>Neoptera</taxon>
        <taxon>Endopterygota</taxon>
        <taxon>Diptera</taxon>
        <taxon>Brachycera</taxon>
        <taxon>Muscomorpha</taxon>
        <taxon>Ephydroidea</taxon>
        <taxon>Drosophilidae</taxon>
        <taxon>Drosophila</taxon>
        <taxon>Sophophora</taxon>
    </lineage>
</organism>
<dbReference type="EMBL" id="AE013599">
    <property type="protein sequence ID" value="AAF57368.2"/>
    <property type="molecule type" value="Genomic_DNA"/>
</dbReference>
<dbReference type="EMBL" id="AE013599">
    <property type="protein sequence ID" value="AGB93262.1"/>
    <property type="molecule type" value="Genomic_DNA"/>
</dbReference>
<dbReference type="EMBL" id="BT132984">
    <property type="protein sequence ID" value="AEX31654.1"/>
    <property type="molecule type" value="mRNA"/>
</dbReference>
<dbReference type="EMBL" id="BT011560">
    <property type="protein sequence ID" value="AAS15696.1"/>
    <property type="molecule type" value="mRNA"/>
</dbReference>
<dbReference type="RefSeq" id="NP_001260729.1">
    <property type="nucleotide sequence ID" value="NM_001273800.1"/>
</dbReference>
<dbReference type="RefSeq" id="NP_525106.2">
    <property type="nucleotide sequence ID" value="NM_080367.3"/>
</dbReference>
<dbReference type="SMR" id="A1Z6M6"/>
<dbReference type="FunCoup" id="A1Z6M6">
    <property type="interactions" value="2438"/>
</dbReference>
<dbReference type="IntAct" id="A1Z6M6">
    <property type="interactions" value="5"/>
</dbReference>
<dbReference type="STRING" id="7227.FBpp0085479"/>
<dbReference type="PaxDb" id="7227-FBpp0085479"/>
<dbReference type="DNASU" id="35565"/>
<dbReference type="EnsemblMetazoa" id="FBtr0086146">
    <property type="protein sequence ID" value="FBpp0085479"/>
    <property type="gene ID" value="FBgn0266518"/>
</dbReference>
<dbReference type="EnsemblMetazoa" id="FBtr0336664">
    <property type="protein sequence ID" value="FBpp0307645"/>
    <property type="gene ID" value="FBgn0266518"/>
</dbReference>
<dbReference type="GeneID" id="35565"/>
<dbReference type="KEGG" id="dme:Dmel_CG3189"/>
<dbReference type="UCSC" id="CG3189-RA">
    <property type="organism name" value="d. melanogaster"/>
</dbReference>
<dbReference type="AGR" id="FB:FBgn0266518"/>
<dbReference type="CTD" id="35565"/>
<dbReference type="FlyBase" id="FBgn0266518">
    <property type="gene designation" value="Dpit47"/>
</dbReference>
<dbReference type="VEuPathDB" id="VectorBase:FBgn0266518"/>
<dbReference type="eggNOG" id="KOG0551">
    <property type="taxonomic scope" value="Eukaryota"/>
</dbReference>
<dbReference type="GeneTree" id="ENSGT00510000049371"/>
<dbReference type="HOGENOM" id="CLU_040446_2_0_1"/>
<dbReference type="InParanoid" id="A1Z6M6"/>
<dbReference type="OMA" id="WRAAQCA"/>
<dbReference type="OrthoDB" id="420195at2759"/>
<dbReference type="PhylomeDB" id="A1Z6M6"/>
<dbReference type="BioGRID-ORCS" id="35565">
    <property type="hits" value="0 hits in 1 CRISPR screen"/>
</dbReference>
<dbReference type="GenomeRNAi" id="35565"/>
<dbReference type="PRO" id="PR:A1Z6M6"/>
<dbReference type="Proteomes" id="UP000000803">
    <property type="component" value="Chromosome 2R"/>
</dbReference>
<dbReference type="Bgee" id="FBgn0266518">
    <property type="expression patterns" value="Expressed in adult class III enteroendocrine cell in adult midgut (Drosophila) and 89 other cell types or tissues"/>
</dbReference>
<dbReference type="GO" id="GO:0005737">
    <property type="term" value="C:cytoplasm"/>
    <property type="evidence" value="ECO:0007669"/>
    <property type="project" value="UniProtKB-SubCell"/>
</dbReference>
<dbReference type="GO" id="GO:0005654">
    <property type="term" value="C:nucleoplasm"/>
    <property type="evidence" value="ECO:0000314"/>
    <property type="project" value="UniProtKB"/>
</dbReference>
<dbReference type="GO" id="GO:0005634">
    <property type="term" value="C:nucleus"/>
    <property type="evidence" value="ECO:0000314"/>
    <property type="project" value="FlyBase"/>
</dbReference>
<dbReference type="GO" id="GO:0030544">
    <property type="term" value="F:Hsp70 protein binding"/>
    <property type="evidence" value="ECO:0000314"/>
    <property type="project" value="UniProtKB"/>
</dbReference>
<dbReference type="GO" id="GO:0051879">
    <property type="term" value="F:Hsp90 protein binding"/>
    <property type="evidence" value="ECO:0000314"/>
    <property type="project" value="UniProtKB"/>
</dbReference>
<dbReference type="GO" id="GO:0006457">
    <property type="term" value="P:protein folding"/>
    <property type="evidence" value="ECO:0000318"/>
    <property type="project" value="GO_Central"/>
</dbReference>
<dbReference type="CDD" id="cd21380">
    <property type="entry name" value="CTWD_Cns1"/>
    <property type="match status" value="1"/>
</dbReference>
<dbReference type="FunFam" id="1.25.40.10:FF:002198">
    <property type="entry name" value="DNA polymerase interacting tpr containing protein of 47kD, isoform A"/>
    <property type="match status" value="1"/>
</dbReference>
<dbReference type="Gene3D" id="1.25.40.10">
    <property type="entry name" value="Tetratricopeptide repeat domain"/>
    <property type="match status" value="1"/>
</dbReference>
<dbReference type="InterPro" id="IPR044059">
    <property type="entry name" value="Csn1/TTC4_wheel"/>
</dbReference>
<dbReference type="InterPro" id="IPR011990">
    <property type="entry name" value="TPR-like_helical_dom_sf"/>
</dbReference>
<dbReference type="InterPro" id="IPR019734">
    <property type="entry name" value="TPR_rpt"/>
</dbReference>
<dbReference type="PANTHER" id="PTHR46035">
    <property type="entry name" value="TETRATRICOPEPTIDE REPEAT PROTEIN 4"/>
    <property type="match status" value="1"/>
</dbReference>
<dbReference type="PANTHER" id="PTHR46035:SF1">
    <property type="entry name" value="TETRATRICOPEPTIDE REPEAT PROTEIN 4"/>
    <property type="match status" value="1"/>
</dbReference>
<dbReference type="Pfam" id="PF18972">
    <property type="entry name" value="Wheel"/>
    <property type="match status" value="1"/>
</dbReference>
<dbReference type="SMART" id="SM00028">
    <property type="entry name" value="TPR"/>
    <property type="match status" value="3"/>
</dbReference>
<dbReference type="SUPFAM" id="SSF48452">
    <property type="entry name" value="TPR-like"/>
    <property type="match status" value="1"/>
</dbReference>
<dbReference type="PROSITE" id="PS50293">
    <property type="entry name" value="TPR_REGION"/>
    <property type="match status" value="1"/>
</dbReference>
<name>TTC4_DROME</name>